<protein>
    <recommendedName>
        <fullName evidence="1">Large ribosomal subunit protein uL22</fullName>
    </recommendedName>
    <alternativeName>
        <fullName evidence="2">50S ribosomal protein L22</fullName>
    </alternativeName>
</protein>
<accession>A3MRV9</accession>
<sequence length="109" mass="11816">MEVKAIHRGARISAQKTRLVADQIRGLPVDKALNVLTFSPKKAAGIVKKVVLSAIANAEHNEGADIDELKIKSIYVDKAASLKRFTARAKGRGNRIEKQSCHITVTVGN</sequence>
<comment type="function">
    <text evidence="1">This protein binds specifically to 23S rRNA; its binding is stimulated by other ribosomal proteins, e.g. L4, L17, and L20. It is important during the early stages of 50S assembly. It makes multiple contacts with different domains of the 23S rRNA in the assembled 50S subunit and ribosome (By similarity).</text>
</comment>
<comment type="function">
    <text evidence="1">The globular domain of the protein is located near the polypeptide exit tunnel on the outside of the subunit, while an extended beta-hairpin is found that lines the wall of the exit tunnel in the center of the 70S ribosome.</text>
</comment>
<comment type="subunit">
    <text evidence="1">Part of the 50S ribosomal subunit.</text>
</comment>
<comment type="similarity">
    <text evidence="1">Belongs to the universal ribosomal protein uL22 family.</text>
</comment>
<proteinExistence type="inferred from homology"/>
<keyword id="KW-0687">Ribonucleoprotein</keyword>
<keyword id="KW-0689">Ribosomal protein</keyword>
<keyword id="KW-0694">RNA-binding</keyword>
<keyword id="KW-0699">rRNA-binding</keyword>
<evidence type="ECO:0000255" key="1">
    <source>
        <dbReference type="HAMAP-Rule" id="MF_01331"/>
    </source>
</evidence>
<evidence type="ECO:0000305" key="2"/>
<reference key="1">
    <citation type="journal article" date="2010" name="Genome Biol. Evol.">
        <title>Continuing evolution of Burkholderia mallei through genome reduction and large-scale rearrangements.</title>
        <authorList>
            <person name="Losada L."/>
            <person name="Ronning C.M."/>
            <person name="DeShazer D."/>
            <person name="Woods D."/>
            <person name="Fedorova N."/>
            <person name="Kim H.S."/>
            <person name="Shabalina S.A."/>
            <person name="Pearson T.R."/>
            <person name="Brinkac L."/>
            <person name="Tan P."/>
            <person name="Nandi T."/>
            <person name="Crabtree J."/>
            <person name="Badger J."/>
            <person name="Beckstrom-Sternberg S."/>
            <person name="Saqib M."/>
            <person name="Schutzer S.E."/>
            <person name="Keim P."/>
            <person name="Nierman W.C."/>
        </authorList>
    </citation>
    <scope>NUCLEOTIDE SEQUENCE [LARGE SCALE GENOMIC DNA]</scope>
    <source>
        <strain>NCTC 10247</strain>
    </source>
</reference>
<feature type="chain" id="PRO_1000052546" description="Large ribosomal subunit protein uL22">
    <location>
        <begin position="1"/>
        <end position="109"/>
    </location>
</feature>
<organism>
    <name type="scientific">Burkholderia mallei (strain NCTC 10247)</name>
    <dbReference type="NCBI Taxonomy" id="320389"/>
    <lineage>
        <taxon>Bacteria</taxon>
        <taxon>Pseudomonadati</taxon>
        <taxon>Pseudomonadota</taxon>
        <taxon>Betaproteobacteria</taxon>
        <taxon>Burkholderiales</taxon>
        <taxon>Burkholderiaceae</taxon>
        <taxon>Burkholderia</taxon>
        <taxon>pseudomallei group</taxon>
    </lineage>
</organism>
<gene>
    <name evidence="1" type="primary">rplV</name>
    <name type="ordered locus">BMA10247_3483</name>
</gene>
<dbReference type="EMBL" id="CP000548">
    <property type="protein sequence ID" value="ABO06891.1"/>
    <property type="molecule type" value="Genomic_DNA"/>
</dbReference>
<dbReference type="RefSeq" id="WP_004199272.1">
    <property type="nucleotide sequence ID" value="NZ_CP007802.1"/>
</dbReference>
<dbReference type="SMR" id="A3MRV9"/>
<dbReference type="GeneID" id="98107155"/>
<dbReference type="KEGG" id="bmaz:BM44_3036"/>
<dbReference type="KEGG" id="bmn:BMA10247_3483"/>
<dbReference type="PATRIC" id="fig|320389.8.peg.3408"/>
<dbReference type="GO" id="GO:0022625">
    <property type="term" value="C:cytosolic large ribosomal subunit"/>
    <property type="evidence" value="ECO:0007669"/>
    <property type="project" value="TreeGrafter"/>
</dbReference>
<dbReference type="GO" id="GO:0019843">
    <property type="term" value="F:rRNA binding"/>
    <property type="evidence" value="ECO:0007669"/>
    <property type="project" value="UniProtKB-UniRule"/>
</dbReference>
<dbReference type="GO" id="GO:0003735">
    <property type="term" value="F:structural constituent of ribosome"/>
    <property type="evidence" value="ECO:0007669"/>
    <property type="project" value="InterPro"/>
</dbReference>
<dbReference type="GO" id="GO:0006412">
    <property type="term" value="P:translation"/>
    <property type="evidence" value="ECO:0007669"/>
    <property type="project" value="UniProtKB-UniRule"/>
</dbReference>
<dbReference type="CDD" id="cd00336">
    <property type="entry name" value="Ribosomal_L22"/>
    <property type="match status" value="1"/>
</dbReference>
<dbReference type="FunFam" id="3.90.470.10:FF:000001">
    <property type="entry name" value="50S ribosomal protein L22"/>
    <property type="match status" value="1"/>
</dbReference>
<dbReference type="Gene3D" id="3.90.470.10">
    <property type="entry name" value="Ribosomal protein L22/L17"/>
    <property type="match status" value="1"/>
</dbReference>
<dbReference type="HAMAP" id="MF_01331_B">
    <property type="entry name" value="Ribosomal_uL22_B"/>
    <property type="match status" value="1"/>
</dbReference>
<dbReference type="InterPro" id="IPR001063">
    <property type="entry name" value="Ribosomal_uL22"/>
</dbReference>
<dbReference type="InterPro" id="IPR005727">
    <property type="entry name" value="Ribosomal_uL22_bac/chlpt-type"/>
</dbReference>
<dbReference type="InterPro" id="IPR047867">
    <property type="entry name" value="Ribosomal_uL22_bac/org-type"/>
</dbReference>
<dbReference type="InterPro" id="IPR018260">
    <property type="entry name" value="Ribosomal_uL22_CS"/>
</dbReference>
<dbReference type="InterPro" id="IPR036394">
    <property type="entry name" value="Ribosomal_uL22_sf"/>
</dbReference>
<dbReference type="NCBIfam" id="TIGR01044">
    <property type="entry name" value="rplV_bact"/>
    <property type="match status" value="1"/>
</dbReference>
<dbReference type="PANTHER" id="PTHR13501">
    <property type="entry name" value="CHLOROPLAST 50S RIBOSOMAL PROTEIN L22-RELATED"/>
    <property type="match status" value="1"/>
</dbReference>
<dbReference type="PANTHER" id="PTHR13501:SF8">
    <property type="entry name" value="LARGE RIBOSOMAL SUBUNIT PROTEIN UL22M"/>
    <property type="match status" value="1"/>
</dbReference>
<dbReference type="Pfam" id="PF00237">
    <property type="entry name" value="Ribosomal_L22"/>
    <property type="match status" value="1"/>
</dbReference>
<dbReference type="SUPFAM" id="SSF54843">
    <property type="entry name" value="Ribosomal protein L22"/>
    <property type="match status" value="1"/>
</dbReference>
<dbReference type="PROSITE" id="PS00464">
    <property type="entry name" value="RIBOSOMAL_L22"/>
    <property type="match status" value="1"/>
</dbReference>
<name>RL22_BURM7</name>